<sequence length="344" mass="40663">MDVVLEVTDQFMFDYMYAWLLPARPALYDFPDKTNGTAQAFSSWVYEPATKFFSLEPSQAAYQSIWTRDNIYRQALSLFLILWLFGLVTYYVFASLSYIFVFDKKTMEHPKFLKNQVWLEIKQTNAALPVMAFFTFPFLVAEVRGYSLLYDTTAEGPGRWYDFFQFPLFIMFTDFGIYWIHRGLHHPLVYKHLHKPHHKWIMPTPYASHAFHPIDGFAQSIPYHIFPFIFPLQKMAYVGLFVFINFWTIMIHDGEYYANNPVINGAACHSVHHFAFNYNYGQFTTLWDRLGGSYREPDGDMFAKEKKMSTTTWKKQVNEMEKIVKEVEGEDDRLYEPTETKKSK</sequence>
<name>ERG3_NEUCR</name>
<evidence type="ECO:0000250" key="1"/>
<evidence type="ECO:0000250" key="2">
    <source>
        <dbReference type="UniProtKB" id="P32353"/>
    </source>
</evidence>
<evidence type="ECO:0000255" key="3"/>
<evidence type="ECO:0000305" key="4"/>
<proteinExistence type="inferred from homology"/>
<organism>
    <name type="scientific">Neurospora crassa (strain ATCC 24698 / 74-OR23-1A / CBS 708.71 / DSM 1257 / FGSC 987)</name>
    <dbReference type="NCBI Taxonomy" id="367110"/>
    <lineage>
        <taxon>Eukaryota</taxon>
        <taxon>Fungi</taxon>
        <taxon>Dikarya</taxon>
        <taxon>Ascomycota</taxon>
        <taxon>Pezizomycotina</taxon>
        <taxon>Sordariomycetes</taxon>
        <taxon>Sordariomycetidae</taxon>
        <taxon>Sordariales</taxon>
        <taxon>Sordariaceae</taxon>
        <taxon>Neurospora</taxon>
    </lineage>
</organism>
<feature type="chain" id="PRO_0000117024" description="Probable Delta(7)-sterol 5(6)-desaturase">
    <location>
        <begin position="1"/>
        <end position="344"/>
    </location>
</feature>
<feature type="transmembrane region" description="Helical" evidence="3">
    <location>
        <begin position="76"/>
        <end position="96"/>
    </location>
</feature>
<feature type="transmembrane region" description="Helical" evidence="3">
    <location>
        <begin position="123"/>
        <end position="143"/>
    </location>
</feature>
<feature type="transmembrane region" description="Helical" evidence="3">
    <location>
        <begin position="160"/>
        <end position="180"/>
    </location>
</feature>
<feature type="transmembrane region" description="Helical" evidence="3">
    <location>
        <begin position="224"/>
        <end position="244"/>
    </location>
</feature>
<feature type="domain" description="Fatty acid hydroxylase" evidence="3">
    <location>
        <begin position="167"/>
        <end position="292"/>
    </location>
</feature>
<feature type="short sequence motif" description="Histidine box-1">
    <location>
        <begin position="181"/>
        <end position="185"/>
    </location>
</feature>
<feature type="short sequence motif" description="Histidine box-2">
    <location>
        <begin position="194"/>
        <end position="198"/>
    </location>
</feature>
<feature type="short sequence motif" description="Histidine box-3">
    <location>
        <begin position="269"/>
        <end position="273"/>
    </location>
</feature>
<gene>
    <name type="ORF">NCU06207</name>
</gene>
<accession>Q7SBB6</accession>
<comment type="function">
    <text evidence="2">Catalyzes the introduction of a C-5 double bond in the B ring of ergosterol. May contribute to the regulation of ergosterol biosynthesis.</text>
</comment>
<comment type="catalytic activity">
    <reaction evidence="2">
        <text>a Delta(7)-sterol + 2 Fe(II)-[cytochrome b5] + O2 + 2 H(+) = a Delta(5),Delta(7)-sterol + 2 Fe(III)-[cytochrome b5] + 2 H2O</text>
        <dbReference type="Rhea" id="RHEA:54320"/>
        <dbReference type="Rhea" id="RHEA-COMP:10438"/>
        <dbReference type="Rhea" id="RHEA-COMP:10439"/>
        <dbReference type="ChEBI" id="CHEBI:15377"/>
        <dbReference type="ChEBI" id="CHEBI:15378"/>
        <dbReference type="ChEBI" id="CHEBI:15379"/>
        <dbReference type="ChEBI" id="CHEBI:29033"/>
        <dbReference type="ChEBI" id="CHEBI:29034"/>
        <dbReference type="ChEBI" id="CHEBI:138130"/>
        <dbReference type="ChEBI" id="CHEBI:138131"/>
        <dbReference type="EC" id="1.14.19.20"/>
    </reaction>
</comment>
<comment type="cofactor">
    <cofactor evidence="1">
        <name>Fe cation</name>
        <dbReference type="ChEBI" id="CHEBI:24875"/>
    </cofactor>
</comment>
<comment type="pathway">
    <text>Steroid metabolism; ergosterol biosynthesis; ergosterol from zymosterol: step 3/5.</text>
</comment>
<comment type="subcellular location">
    <subcellularLocation>
        <location evidence="4">Endoplasmic reticulum membrane</location>
        <topology evidence="4">Multi-pass membrane protein</topology>
    </subcellularLocation>
</comment>
<comment type="domain">
    <text>The histidine box domains may contain the active site and/or be involved in metal ion binding.</text>
</comment>
<comment type="similarity">
    <text evidence="4">Belongs to the sterol desaturase family.</text>
</comment>
<dbReference type="EC" id="1.14.19.20"/>
<dbReference type="EMBL" id="CM002238">
    <property type="protein sequence ID" value="EAA33687.1"/>
    <property type="molecule type" value="Genomic_DNA"/>
</dbReference>
<dbReference type="RefSeq" id="XP_962923.1">
    <property type="nucleotide sequence ID" value="XM_957830.2"/>
</dbReference>
<dbReference type="SMR" id="Q7SBB6"/>
<dbReference type="FunCoup" id="Q7SBB6">
    <property type="interactions" value="168"/>
</dbReference>
<dbReference type="STRING" id="367110.Q7SBB6"/>
<dbReference type="PaxDb" id="5141-EFNCRP00000006022"/>
<dbReference type="EnsemblFungi" id="EAA33687">
    <property type="protein sequence ID" value="EAA33687"/>
    <property type="gene ID" value="NCU06207"/>
</dbReference>
<dbReference type="GeneID" id="3879071"/>
<dbReference type="KEGG" id="ncr:NCU06207"/>
<dbReference type="VEuPathDB" id="FungiDB:NCU06207"/>
<dbReference type="HOGENOM" id="CLU_047036_3_0_1"/>
<dbReference type="InParanoid" id="Q7SBB6"/>
<dbReference type="OMA" id="GPGLWYN"/>
<dbReference type="OrthoDB" id="6354873at2759"/>
<dbReference type="UniPathway" id="UPA00768">
    <property type="reaction ID" value="UER00762"/>
</dbReference>
<dbReference type="Proteomes" id="UP000001805">
    <property type="component" value="Chromosome 3, Linkage Group III"/>
</dbReference>
<dbReference type="GO" id="GO:0005788">
    <property type="term" value="C:endoplasmic reticulum lumen"/>
    <property type="evidence" value="ECO:0007669"/>
    <property type="project" value="EnsemblFungi"/>
</dbReference>
<dbReference type="GO" id="GO:0005789">
    <property type="term" value="C:endoplasmic reticulum membrane"/>
    <property type="evidence" value="ECO:0007669"/>
    <property type="project" value="UniProtKB-SubCell"/>
</dbReference>
<dbReference type="GO" id="GO:0016020">
    <property type="term" value="C:membrane"/>
    <property type="evidence" value="ECO:0000318"/>
    <property type="project" value="GO_Central"/>
</dbReference>
<dbReference type="GO" id="GO:0000248">
    <property type="term" value="F:C-5 sterol desaturase activity"/>
    <property type="evidence" value="ECO:0000318"/>
    <property type="project" value="GO_Central"/>
</dbReference>
<dbReference type="GO" id="GO:0050046">
    <property type="term" value="F:delta7-sterol 5(6)-desaturase activity"/>
    <property type="evidence" value="ECO:0007669"/>
    <property type="project" value="UniProtKB-EC"/>
</dbReference>
<dbReference type="GO" id="GO:0005506">
    <property type="term" value="F:iron ion binding"/>
    <property type="evidence" value="ECO:0007669"/>
    <property type="project" value="InterPro"/>
</dbReference>
<dbReference type="GO" id="GO:0006696">
    <property type="term" value="P:ergosterol biosynthetic process"/>
    <property type="evidence" value="ECO:0007669"/>
    <property type="project" value="EnsemblFungi"/>
</dbReference>
<dbReference type="GO" id="GO:0016126">
    <property type="term" value="P:sterol biosynthetic process"/>
    <property type="evidence" value="ECO:0000318"/>
    <property type="project" value="GO_Central"/>
</dbReference>
<dbReference type="InterPro" id="IPR006694">
    <property type="entry name" value="Fatty_acid_hydroxylase"/>
</dbReference>
<dbReference type="InterPro" id="IPR050307">
    <property type="entry name" value="Sterol_Desaturase_Related"/>
</dbReference>
<dbReference type="PANTHER" id="PTHR11863">
    <property type="entry name" value="STEROL DESATURASE"/>
    <property type="match status" value="1"/>
</dbReference>
<dbReference type="Pfam" id="PF04116">
    <property type="entry name" value="FA_hydroxylase"/>
    <property type="match status" value="1"/>
</dbReference>
<keyword id="KW-0256">Endoplasmic reticulum</keyword>
<keyword id="KW-0408">Iron</keyword>
<keyword id="KW-0444">Lipid biosynthesis</keyword>
<keyword id="KW-0443">Lipid metabolism</keyword>
<keyword id="KW-0472">Membrane</keyword>
<keyword id="KW-0560">Oxidoreductase</keyword>
<keyword id="KW-1185">Reference proteome</keyword>
<keyword id="KW-0752">Steroid biosynthesis</keyword>
<keyword id="KW-0753">Steroid metabolism</keyword>
<keyword id="KW-0756">Sterol biosynthesis</keyword>
<keyword id="KW-1207">Sterol metabolism</keyword>
<keyword id="KW-0812">Transmembrane</keyword>
<keyword id="KW-1133">Transmembrane helix</keyword>
<protein>
    <recommendedName>
        <fullName>Probable Delta(7)-sterol 5(6)-desaturase</fullName>
        <ecNumber>1.14.19.20</ecNumber>
    </recommendedName>
    <alternativeName>
        <fullName>C-5 sterol desaturase</fullName>
    </alternativeName>
    <alternativeName>
        <fullName>Ergosterol Delta(5,6) desaturase</fullName>
    </alternativeName>
    <alternativeName>
        <fullName>Sterol-C5-desaturase</fullName>
    </alternativeName>
</protein>
<reference key="1">
    <citation type="journal article" date="2003" name="Nature">
        <title>The genome sequence of the filamentous fungus Neurospora crassa.</title>
        <authorList>
            <person name="Galagan J.E."/>
            <person name="Calvo S.E."/>
            <person name="Borkovich K.A."/>
            <person name="Selker E.U."/>
            <person name="Read N.D."/>
            <person name="Jaffe D.B."/>
            <person name="FitzHugh W."/>
            <person name="Ma L.-J."/>
            <person name="Smirnov S."/>
            <person name="Purcell S."/>
            <person name="Rehman B."/>
            <person name="Elkins T."/>
            <person name="Engels R."/>
            <person name="Wang S."/>
            <person name="Nielsen C.B."/>
            <person name="Butler J."/>
            <person name="Endrizzi M."/>
            <person name="Qui D."/>
            <person name="Ianakiev P."/>
            <person name="Bell-Pedersen D."/>
            <person name="Nelson M.A."/>
            <person name="Werner-Washburne M."/>
            <person name="Selitrennikoff C.P."/>
            <person name="Kinsey J.A."/>
            <person name="Braun E.L."/>
            <person name="Zelter A."/>
            <person name="Schulte U."/>
            <person name="Kothe G.O."/>
            <person name="Jedd G."/>
            <person name="Mewes H.-W."/>
            <person name="Staben C."/>
            <person name="Marcotte E."/>
            <person name="Greenberg D."/>
            <person name="Roy A."/>
            <person name="Foley K."/>
            <person name="Naylor J."/>
            <person name="Stange-Thomann N."/>
            <person name="Barrett R."/>
            <person name="Gnerre S."/>
            <person name="Kamal M."/>
            <person name="Kamvysselis M."/>
            <person name="Mauceli E.W."/>
            <person name="Bielke C."/>
            <person name="Rudd S."/>
            <person name="Frishman D."/>
            <person name="Krystofova S."/>
            <person name="Rasmussen C."/>
            <person name="Metzenberg R.L."/>
            <person name="Perkins D.D."/>
            <person name="Kroken S."/>
            <person name="Cogoni C."/>
            <person name="Macino G."/>
            <person name="Catcheside D.E.A."/>
            <person name="Li W."/>
            <person name="Pratt R.J."/>
            <person name="Osmani S.A."/>
            <person name="DeSouza C.P.C."/>
            <person name="Glass N.L."/>
            <person name="Orbach M.J."/>
            <person name="Berglund J.A."/>
            <person name="Voelker R."/>
            <person name="Yarden O."/>
            <person name="Plamann M."/>
            <person name="Seiler S."/>
            <person name="Dunlap J.C."/>
            <person name="Radford A."/>
            <person name="Aramayo R."/>
            <person name="Natvig D.O."/>
            <person name="Alex L.A."/>
            <person name="Mannhaupt G."/>
            <person name="Ebbole D.J."/>
            <person name="Freitag M."/>
            <person name="Paulsen I."/>
            <person name="Sachs M.S."/>
            <person name="Lander E.S."/>
            <person name="Nusbaum C."/>
            <person name="Birren B.W."/>
        </authorList>
    </citation>
    <scope>NUCLEOTIDE SEQUENCE [LARGE SCALE GENOMIC DNA]</scope>
    <source>
        <strain>ATCC 24698 / 74-OR23-1A / CBS 708.71 / DSM 1257 / FGSC 987</strain>
    </source>
</reference>